<organism>
    <name type="scientific">Buchnera aphidicola subsp. Acyrthosiphon pisum (strain APS)</name>
    <name type="common">Acyrthosiphon pisum symbiotic bacterium</name>
    <dbReference type="NCBI Taxonomy" id="107806"/>
    <lineage>
        <taxon>Bacteria</taxon>
        <taxon>Pseudomonadati</taxon>
        <taxon>Pseudomonadota</taxon>
        <taxon>Gammaproteobacteria</taxon>
        <taxon>Enterobacterales</taxon>
        <taxon>Erwiniaceae</taxon>
        <taxon>Buchnera</taxon>
    </lineage>
</organism>
<gene>
    <name evidence="1" type="primary">pfkA</name>
    <name type="ordered locus">BU305</name>
</gene>
<dbReference type="EC" id="2.7.1.11" evidence="1"/>
<dbReference type="EMBL" id="BA000003">
    <property type="protein sequence ID" value="BAB13014.1"/>
    <property type="molecule type" value="Genomic_DNA"/>
</dbReference>
<dbReference type="RefSeq" id="NP_240128.1">
    <property type="nucleotide sequence ID" value="NC_002528.1"/>
</dbReference>
<dbReference type="RefSeq" id="WP_009874258.1">
    <property type="nucleotide sequence ID" value="NZ_AP036055.1"/>
</dbReference>
<dbReference type="SMR" id="P57391"/>
<dbReference type="STRING" id="563178.BUAP5A_299"/>
<dbReference type="EnsemblBacteria" id="BAB13014">
    <property type="protein sequence ID" value="BAB13014"/>
    <property type="gene ID" value="BAB13014"/>
</dbReference>
<dbReference type="KEGG" id="buc:BU305"/>
<dbReference type="PATRIC" id="fig|107806.10.peg.316"/>
<dbReference type="eggNOG" id="COG0205">
    <property type="taxonomic scope" value="Bacteria"/>
</dbReference>
<dbReference type="HOGENOM" id="CLU_020655_0_1_6"/>
<dbReference type="UniPathway" id="UPA00109">
    <property type="reaction ID" value="UER00182"/>
</dbReference>
<dbReference type="Proteomes" id="UP000001806">
    <property type="component" value="Chromosome"/>
</dbReference>
<dbReference type="GO" id="GO:0005945">
    <property type="term" value="C:6-phosphofructokinase complex"/>
    <property type="evidence" value="ECO:0007669"/>
    <property type="project" value="TreeGrafter"/>
</dbReference>
<dbReference type="GO" id="GO:0003872">
    <property type="term" value="F:6-phosphofructokinase activity"/>
    <property type="evidence" value="ECO:0007669"/>
    <property type="project" value="UniProtKB-UniRule"/>
</dbReference>
<dbReference type="GO" id="GO:0016208">
    <property type="term" value="F:AMP binding"/>
    <property type="evidence" value="ECO:0007669"/>
    <property type="project" value="TreeGrafter"/>
</dbReference>
<dbReference type="GO" id="GO:0005524">
    <property type="term" value="F:ATP binding"/>
    <property type="evidence" value="ECO:0007669"/>
    <property type="project" value="UniProtKB-KW"/>
</dbReference>
<dbReference type="GO" id="GO:0070095">
    <property type="term" value="F:fructose-6-phosphate binding"/>
    <property type="evidence" value="ECO:0007669"/>
    <property type="project" value="TreeGrafter"/>
</dbReference>
<dbReference type="GO" id="GO:0042802">
    <property type="term" value="F:identical protein binding"/>
    <property type="evidence" value="ECO:0007669"/>
    <property type="project" value="TreeGrafter"/>
</dbReference>
<dbReference type="GO" id="GO:0046872">
    <property type="term" value="F:metal ion binding"/>
    <property type="evidence" value="ECO:0007669"/>
    <property type="project" value="UniProtKB-KW"/>
</dbReference>
<dbReference type="GO" id="GO:0048029">
    <property type="term" value="F:monosaccharide binding"/>
    <property type="evidence" value="ECO:0007669"/>
    <property type="project" value="TreeGrafter"/>
</dbReference>
<dbReference type="GO" id="GO:0061621">
    <property type="term" value="P:canonical glycolysis"/>
    <property type="evidence" value="ECO:0007669"/>
    <property type="project" value="TreeGrafter"/>
</dbReference>
<dbReference type="GO" id="GO:0030388">
    <property type="term" value="P:fructose 1,6-bisphosphate metabolic process"/>
    <property type="evidence" value="ECO:0007669"/>
    <property type="project" value="TreeGrafter"/>
</dbReference>
<dbReference type="GO" id="GO:0006002">
    <property type="term" value="P:fructose 6-phosphate metabolic process"/>
    <property type="evidence" value="ECO:0007669"/>
    <property type="project" value="InterPro"/>
</dbReference>
<dbReference type="CDD" id="cd00763">
    <property type="entry name" value="Bacterial_PFK"/>
    <property type="match status" value="1"/>
</dbReference>
<dbReference type="FunFam" id="3.40.50.450:FF:000001">
    <property type="entry name" value="ATP-dependent 6-phosphofructokinase"/>
    <property type="match status" value="1"/>
</dbReference>
<dbReference type="FunFam" id="3.40.50.460:FF:000002">
    <property type="entry name" value="ATP-dependent 6-phosphofructokinase"/>
    <property type="match status" value="1"/>
</dbReference>
<dbReference type="Gene3D" id="3.40.50.450">
    <property type="match status" value="1"/>
</dbReference>
<dbReference type="Gene3D" id="3.40.50.460">
    <property type="entry name" value="Phosphofructokinase domain"/>
    <property type="match status" value="1"/>
</dbReference>
<dbReference type="HAMAP" id="MF_00339">
    <property type="entry name" value="Phosphofructokinase_I_B1"/>
    <property type="match status" value="1"/>
</dbReference>
<dbReference type="InterPro" id="IPR022953">
    <property type="entry name" value="ATP_PFK"/>
</dbReference>
<dbReference type="InterPro" id="IPR012003">
    <property type="entry name" value="ATP_PFK_prok-type"/>
</dbReference>
<dbReference type="InterPro" id="IPR012828">
    <property type="entry name" value="PFKA_ATP_prok"/>
</dbReference>
<dbReference type="InterPro" id="IPR015912">
    <property type="entry name" value="Phosphofructokinase_CS"/>
</dbReference>
<dbReference type="InterPro" id="IPR000023">
    <property type="entry name" value="Phosphofructokinase_dom"/>
</dbReference>
<dbReference type="InterPro" id="IPR035966">
    <property type="entry name" value="PKF_sf"/>
</dbReference>
<dbReference type="NCBIfam" id="TIGR02482">
    <property type="entry name" value="PFKA_ATP"/>
    <property type="match status" value="1"/>
</dbReference>
<dbReference type="NCBIfam" id="NF002872">
    <property type="entry name" value="PRK03202.1"/>
    <property type="match status" value="1"/>
</dbReference>
<dbReference type="PANTHER" id="PTHR13697:SF4">
    <property type="entry name" value="ATP-DEPENDENT 6-PHOSPHOFRUCTOKINASE"/>
    <property type="match status" value="1"/>
</dbReference>
<dbReference type="PANTHER" id="PTHR13697">
    <property type="entry name" value="PHOSPHOFRUCTOKINASE"/>
    <property type="match status" value="1"/>
</dbReference>
<dbReference type="Pfam" id="PF00365">
    <property type="entry name" value="PFK"/>
    <property type="match status" value="1"/>
</dbReference>
<dbReference type="PIRSF" id="PIRSF000532">
    <property type="entry name" value="ATP_PFK_prok"/>
    <property type="match status" value="1"/>
</dbReference>
<dbReference type="PRINTS" id="PR00476">
    <property type="entry name" value="PHFRCTKINASE"/>
</dbReference>
<dbReference type="SUPFAM" id="SSF53784">
    <property type="entry name" value="Phosphofructokinase"/>
    <property type="match status" value="1"/>
</dbReference>
<dbReference type="PROSITE" id="PS00433">
    <property type="entry name" value="PHOSPHOFRUCTOKINASE"/>
    <property type="match status" value="1"/>
</dbReference>
<proteinExistence type="inferred from homology"/>
<evidence type="ECO:0000255" key="1">
    <source>
        <dbReference type="HAMAP-Rule" id="MF_00339"/>
    </source>
</evidence>
<name>PFKA_BUCAI</name>
<protein>
    <recommendedName>
        <fullName evidence="1">ATP-dependent 6-phosphofructokinase</fullName>
        <shortName evidence="1">ATP-PFK</shortName>
        <shortName evidence="1">Phosphofructokinase</shortName>
        <ecNumber evidence="1">2.7.1.11</ecNumber>
    </recommendedName>
    <alternativeName>
        <fullName evidence="1">Phosphohexokinase</fullName>
    </alternativeName>
</protein>
<feature type="chain" id="PRO_0000111940" description="ATP-dependent 6-phosphofructokinase">
    <location>
        <begin position="1"/>
        <end position="320"/>
    </location>
</feature>
<feature type="active site" description="Proton acceptor" evidence="1">
    <location>
        <position position="128"/>
    </location>
</feature>
<feature type="binding site" evidence="1">
    <location>
        <position position="12"/>
    </location>
    <ligand>
        <name>ATP</name>
        <dbReference type="ChEBI" id="CHEBI:30616"/>
    </ligand>
</feature>
<feature type="binding site" evidence="1">
    <location>
        <begin position="22"/>
        <end position="26"/>
    </location>
    <ligand>
        <name>ADP</name>
        <dbReference type="ChEBI" id="CHEBI:456216"/>
        <note>allosteric activator; ligand shared between dimeric partners</note>
    </ligand>
</feature>
<feature type="binding site" evidence="1">
    <location>
        <begin position="55"/>
        <end position="60"/>
    </location>
    <ligand>
        <name>ADP</name>
        <dbReference type="ChEBI" id="CHEBI:456216"/>
        <note>allosteric activator; ligand shared between dimeric partners</note>
    </ligand>
</feature>
<feature type="binding site" evidence="1">
    <location>
        <begin position="73"/>
        <end position="74"/>
    </location>
    <ligand>
        <name>ATP</name>
        <dbReference type="ChEBI" id="CHEBI:30616"/>
    </ligand>
</feature>
<feature type="binding site" evidence="1">
    <location>
        <begin position="103"/>
        <end position="106"/>
    </location>
    <ligand>
        <name>ATP</name>
        <dbReference type="ChEBI" id="CHEBI:30616"/>
    </ligand>
</feature>
<feature type="binding site" evidence="1">
    <location>
        <position position="104"/>
    </location>
    <ligand>
        <name>Mg(2+)</name>
        <dbReference type="ChEBI" id="CHEBI:18420"/>
        <note>catalytic</note>
    </ligand>
</feature>
<feature type="binding site" description="in other chain" evidence="1">
    <location>
        <begin position="126"/>
        <end position="128"/>
    </location>
    <ligand>
        <name>substrate</name>
        <note>ligand shared between dimeric partners</note>
    </ligand>
</feature>
<feature type="binding site" description="in other chain" evidence="1">
    <location>
        <position position="155"/>
    </location>
    <ligand>
        <name>ADP</name>
        <dbReference type="ChEBI" id="CHEBI:456216"/>
        <note>allosteric activator; ligand shared between dimeric partners</note>
    </ligand>
</feature>
<feature type="binding site" evidence="1">
    <location>
        <position position="163"/>
    </location>
    <ligand>
        <name>substrate</name>
        <note>ligand shared between dimeric partners</note>
    </ligand>
</feature>
<feature type="binding site" description="in other chain" evidence="1">
    <location>
        <begin position="170"/>
        <end position="172"/>
    </location>
    <ligand>
        <name>substrate</name>
        <note>ligand shared between dimeric partners</note>
    </ligand>
</feature>
<feature type="binding site" description="in other chain" evidence="1">
    <location>
        <begin position="186"/>
        <end position="188"/>
    </location>
    <ligand>
        <name>ADP</name>
        <dbReference type="ChEBI" id="CHEBI:456216"/>
        <note>allosteric activator; ligand shared between dimeric partners</note>
    </ligand>
</feature>
<feature type="binding site" description="in other chain" evidence="1">
    <location>
        <position position="212"/>
    </location>
    <ligand>
        <name>ADP</name>
        <dbReference type="ChEBI" id="CHEBI:456216"/>
        <note>allosteric activator; ligand shared between dimeric partners</note>
    </ligand>
</feature>
<feature type="binding site" description="in other chain" evidence="1">
    <location>
        <begin position="214"/>
        <end position="216"/>
    </location>
    <ligand>
        <name>ADP</name>
        <dbReference type="ChEBI" id="CHEBI:456216"/>
        <note>allosteric activator; ligand shared between dimeric partners</note>
    </ligand>
</feature>
<feature type="binding site" description="in other chain" evidence="1">
    <location>
        <position position="223"/>
    </location>
    <ligand>
        <name>substrate</name>
        <note>ligand shared between dimeric partners</note>
    </ligand>
</feature>
<feature type="binding site" evidence="1">
    <location>
        <position position="244"/>
    </location>
    <ligand>
        <name>substrate</name>
        <note>ligand shared between dimeric partners</note>
    </ligand>
</feature>
<feature type="binding site" description="in other chain" evidence="1">
    <location>
        <begin position="250"/>
        <end position="253"/>
    </location>
    <ligand>
        <name>substrate</name>
        <note>ligand shared between dimeric partners</note>
    </ligand>
</feature>
<keyword id="KW-0021">Allosteric enzyme</keyword>
<keyword id="KW-0067">ATP-binding</keyword>
<keyword id="KW-0963">Cytoplasm</keyword>
<keyword id="KW-0324">Glycolysis</keyword>
<keyword id="KW-0418">Kinase</keyword>
<keyword id="KW-0460">Magnesium</keyword>
<keyword id="KW-0479">Metal-binding</keyword>
<keyword id="KW-0547">Nucleotide-binding</keyword>
<keyword id="KW-1185">Reference proteome</keyword>
<keyword id="KW-0808">Transferase</keyword>
<comment type="function">
    <text evidence="1">Catalyzes the phosphorylation of D-fructose 6-phosphate to fructose 1,6-bisphosphate by ATP, the first committing step of glycolysis.</text>
</comment>
<comment type="catalytic activity">
    <reaction evidence="1">
        <text>beta-D-fructose 6-phosphate + ATP = beta-D-fructose 1,6-bisphosphate + ADP + H(+)</text>
        <dbReference type="Rhea" id="RHEA:16109"/>
        <dbReference type="ChEBI" id="CHEBI:15378"/>
        <dbReference type="ChEBI" id="CHEBI:30616"/>
        <dbReference type="ChEBI" id="CHEBI:32966"/>
        <dbReference type="ChEBI" id="CHEBI:57634"/>
        <dbReference type="ChEBI" id="CHEBI:456216"/>
        <dbReference type="EC" id="2.7.1.11"/>
    </reaction>
</comment>
<comment type="cofactor">
    <cofactor evidence="1">
        <name>Mg(2+)</name>
        <dbReference type="ChEBI" id="CHEBI:18420"/>
    </cofactor>
</comment>
<comment type="activity regulation">
    <text evidence="1">Allosterically activated by ADP and other diphosphonucleosides, and allosterically inhibited by phosphoenolpyruvate.</text>
</comment>
<comment type="pathway">
    <text evidence="1">Carbohydrate degradation; glycolysis; D-glyceraldehyde 3-phosphate and glycerone phosphate from D-glucose: step 3/4.</text>
</comment>
<comment type="subunit">
    <text evidence="1">Homotetramer.</text>
</comment>
<comment type="subcellular location">
    <subcellularLocation>
        <location evidence="1">Cytoplasm</location>
    </subcellularLocation>
</comment>
<comment type="similarity">
    <text evidence="1">Belongs to the phosphofructokinase type A (PFKA) family. ATP-dependent PFK group I subfamily. Prokaryotic clade 'B1' sub-subfamily.</text>
</comment>
<accession>P57391</accession>
<reference key="1">
    <citation type="journal article" date="2000" name="Nature">
        <title>Genome sequence of the endocellular bacterial symbiont of aphids Buchnera sp. APS.</title>
        <authorList>
            <person name="Shigenobu S."/>
            <person name="Watanabe H."/>
            <person name="Hattori M."/>
            <person name="Sakaki Y."/>
            <person name="Ishikawa H."/>
        </authorList>
    </citation>
    <scope>NUCLEOTIDE SEQUENCE [LARGE SCALE GENOMIC DNA]</scope>
    <source>
        <strain>APS</strain>
    </source>
</reference>
<sequence length="320" mass="35278">MIKKIGVLTSGGDAPGMNAAIRGVVRTALSERLEVFGIYDGYLGLYENRMVQLDRYSVSDMINRGGTFLGSARFASFYQDKIRSIAVQNIKKRKIDALVVIGGDGSYIGAQKLTEMGIPCISIPGTIDNDVSGTDYTIGYFTALQTVVEAIDRLRDTSSSHQRISIVEVMGRHCGDLTLAAAIAGGCEFIVLPEIDYKKEDLVIEIQAGIAKGKKHAIVAITEYICDVEELAQYIEKKTNRETRATILGHIQRGGAPVVYDRILASRMGAYSVELLIKGYQGKCVGIQNEKMVFNDIKNALKNMKRTFKKDWLITAKKLY</sequence>